<evidence type="ECO:0000255" key="1"/>
<evidence type="ECO:0000255" key="2">
    <source>
        <dbReference type="PROSITE-ProRule" id="PRU00498"/>
    </source>
</evidence>
<evidence type="ECO:0000256" key="3">
    <source>
        <dbReference type="SAM" id="MobiDB-lite"/>
    </source>
</evidence>
<evidence type="ECO:0000269" key="4">
    <source>
    </source>
</evidence>
<evidence type="ECO:0000269" key="5">
    <source>
    </source>
</evidence>
<evidence type="ECO:0000303" key="6">
    <source>
    </source>
</evidence>
<evidence type="ECO:0000305" key="7"/>
<evidence type="ECO:0000305" key="8">
    <source>
    </source>
</evidence>
<proteinExistence type="evidence at transcript level"/>
<protein>
    <recommendedName>
        <fullName evidence="6">Chitin synthase 3A</fullName>
        <ecNumber evidence="8">2.4.1.16</ecNumber>
    </recommendedName>
    <alternativeName>
        <fullName evidence="7">Chitin-UDP acetyl-glucosaminyl transferase 3A</fullName>
    </alternativeName>
    <alternativeName>
        <fullName evidence="6">Class-III chitin synthase 3A</fullName>
    </alternativeName>
</protein>
<gene>
    <name evidence="6" type="primary">CHS3A</name>
    <name type="ORF">FGRAMPH1_01T12837</name>
</gene>
<comment type="function">
    <text evidence="5 8">Polymerizes chitin, a structural polymer of the cell wall and septum, by transferring the sugar moiety of UDP-GlcNAc to the non-reducing end of the growing chitin polymer (Probable). Shows additive effects in septum formation with CHS1, CHS2, CHS4, CHS5, CHS6 and CHS7 (PubMed:27725723). Involved in virulence and mediates mycotoxin deoxinivalenol (DON) biosynthesis via the regulation of the expression of TRI4, TRI5 and TRI6 (PubMed:27725723).</text>
</comment>
<comment type="catalytic activity">
    <reaction evidence="8">
        <text>[(1-&gt;4)-N-acetyl-beta-D-glucosaminyl](n) + UDP-N-acetyl-alpha-D-glucosamine = [(1-&gt;4)-N-acetyl-beta-D-glucosaminyl](n+1) + UDP + H(+)</text>
        <dbReference type="Rhea" id="RHEA:16637"/>
        <dbReference type="Rhea" id="RHEA-COMP:9593"/>
        <dbReference type="Rhea" id="RHEA-COMP:9595"/>
        <dbReference type="ChEBI" id="CHEBI:15378"/>
        <dbReference type="ChEBI" id="CHEBI:17029"/>
        <dbReference type="ChEBI" id="CHEBI:57705"/>
        <dbReference type="ChEBI" id="CHEBI:58223"/>
        <dbReference type="EC" id="2.4.1.16"/>
    </reaction>
    <physiologicalReaction direction="left-to-right" evidence="8">
        <dbReference type="Rhea" id="RHEA:16638"/>
    </physiologicalReaction>
</comment>
<comment type="subcellular location">
    <subcellularLocation>
        <location evidence="7">Cell membrane</location>
        <topology evidence="1">Multi-pass membrane protein</topology>
    </subcellularLocation>
</comment>
<comment type="induction">
    <text evidence="5">Exhibits higher expression levels in hyphae than in germinating conidia (PubMed:27725723). Expression is increased in the absence of chitin synthase CHS2 (PubMed:27725723).</text>
</comment>
<comment type="disruption phenotype">
    <text evidence="4">Does not affect mycelial growth, virulence, nor sensitivity to various stresses.</text>
</comment>
<comment type="similarity">
    <text evidence="7">Belongs to the chitin synthase family. Class III subfamily.</text>
</comment>
<accession>A0A1C3YMT2</accession>
<keyword id="KW-1003">Cell membrane</keyword>
<keyword id="KW-0961">Cell wall biogenesis/degradation</keyword>
<keyword id="KW-0325">Glycoprotein</keyword>
<keyword id="KW-0328">Glycosyltransferase</keyword>
<keyword id="KW-0472">Membrane</keyword>
<keyword id="KW-1185">Reference proteome</keyword>
<keyword id="KW-0808">Transferase</keyword>
<keyword id="KW-0812">Transmembrane</keyword>
<keyword id="KW-1133">Transmembrane helix</keyword>
<keyword id="KW-0843">Virulence</keyword>
<reference key="1">
    <citation type="journal article" date="2007" name="Science">
        <title>The Fusarium graminearum genome reveals a link between localized polymorphism and pathogen specialization.</title>
        <authorList>
            <person name="Cuomo C.A."/>
            <person name="Gueldener U."/>
            <person name="Xu J.-R."/>
            <person name="Trail F."/>
            <person name="Turgeon B.G."/>
            <person name="Di Pietro A."/>
            <person name="Walton J.D."/>
            <person name="Ma L.-J."/>
            <person name="Baker S.E."/>
            <person name="Rep M."/>
            <person name="Adam G."/>
            <person name="Antoniw J."/>
            <person name="Baldwin T."/>
            <person name="Calvo S.E."/>
            <person name="Chang Y.-L."/>
            <person name="DeCaprio D."/>
            <person name="Gale L.R."/>
            <person name="Gnerre S."/>
            <person name="Goswami R.S."/>
            <person name="Hammond-Kosack K."/>
            <person name="Harris L.J."/>
            <person name="Hilburn K."/>
            <person name="Kennell J.C."/>
            <person name="Kroken S."/>
            <person name="Magnuson J.K."/>
            <person name="Mannhaupt G."/>
            <person name="Mauceli E.W."/>
            <person name="Mewes H.-W."/>
            <person name="Mitterbauer R."/>
            <person name="Muehlbauer G."/>
            <person name="Muensterkoetter M."/>
            <person name="Nelson D."/>
            <person name="O'Donnell K."/>
            <person name="Ouellet T."/>
            <person name="Qi W."/>
            <person name="Quesneville H."/>
            <person name="Roncero M.I.G."/>
            <person name="Seong K.-Y."/>
            <person name="Tetko I.V."/>
            <person name="Urban M."/>
            <person name="Waalwijk C."/>
            <person name="Ward T.J."/>
            <person name="Yao J."/>
            <person name="Birren B.W."/>
            <person name="Kistler H.C."/>
        </authorList>
    </citation>
    <scope>NUCLEOTIDE SEQUENCE [LARGE SCALE GENOMIC DNA]</scope>
    <source>
        <strain>ATCC MYA-4620 / CBS 123657 / FGSC 9075 / NRRL 31084 / PH-1</strain>
    </source>
</reference>
<reference key="2">
    <citation type="journal article" date="2010" name="Nature">
        <title>Comparative genomics reveals mobile pathogenicity chromosomes in Fusarium.</title>
        <authorList>
            <person name="Ma L.-J."/>
            <person name="van der Does H.C."/>
            <person name="Borkovich K.A."/>
            <person name="Coleman J.J."/>
            <person name="Daboussi M.-J."/>
            <person name="Di Pietro A."/>
            <person name="Dufresne M."/>
            <person name="Freitag M."/>
            <person name="Grabherr M."/>
            <person name="Henrissat B."/>
            <person name="Houterman P.M."/>
            <person name="Kang S."/>
            <person name="Shim W.-B."/>
            <person name="Woloshuk C."/>
            <person name="Xie X."/>
            <person name="Xu J.-R."/>
            <person name="Antoniw J."/>
            <person name="Baker S.E."/>
            <person name="Bluhm B.H."/>
            <person name="Breakspear A."/>
            <person name="Brown D.W."/>
            <person name="Butchko R.A.E."/>
            <person name="Chapman S."/>
            <person name="Coulson R."/>
            <person name="Coutinho P.M."/>
            <person name="Danchin E.G.J."/>
            <person name="Diener A."/>
            <person name="Gale L.R."/>
            <person name="Gardiner D.M."/>
            <person name="Goff S."/>
            <person name="Hammond-Kosack K.E."/>
            <person name="Hilburn K."/>
            <person name="Hua-Van A."/>
            <person name="Jonkers W."/>
            <person name="Kazan K."/>
            <person name="Kodira C.D."/>
            <person name="Koehrsen M."/>
            <person name="Kumar L."/>
            <person name="Lee Y.-H."/>
            <person name="Li L."/>
            <person name="Manners J.M."/>
            <person name="Miranda-Saavedra D."/>
            <person name="Mukherjee M."/>
            <person name="Park G."/>
            <person name="Park J."/>
            <person name="Park S.-Y."/>
            <person name="Proctor R.H."/>
            <person name="Regev A."/>
            <person name="Ruiz-Roldan M.C."/>
            <person name="Sain D."/>
            <person name="Sakthikumar S."/>
            <person name="Sykes S."/>
            <person name="Schwartz D.C."/>
            <person name="Turgeon B.G."/>
            <person name="Wapinski I."/>
            <person name="Yoder O."/>
            <person name="Young S."/>
            <person name="Zeng Q."/>
            <person name="Zhou S."/>
            <person name="Galagan J."/>
            <person name="Cuomo C.A."/>
            <person name="Kistler H.C."/>
            <person name="Rep M."/>
        </authorList>
    </citation>
    <scope>GENOME REANNOTATION</scope>
    <source>
        <strain>ATCC MYA-4620 / CBS 123657 / FGSC 9075 / NRRL 31084 / PH-1</strain>
    </source>
</reference>
<reference key="3">
    <citation type="journal article" date="2015" name="BMC Genomics">
        <title>The completed genome sequence of the pathogenic ascomycete fungus Fusarium graminearum.</title>
        <authorList>
            <person name="King R."/>
            <person name="Urban M."/>
            <person name="Hammond-Kosack M.C.U."/>
            <person name="Hassani-Pak K."/>
            <person name="Hammond-Kosack K.E."/>
        </authorList>
    </citation>
    <scope>NUCLEOTIDE SEQUENCE [LARGE SCALE GENOMIC DNA]</scope>
    <source>
        <strain>ATCC MYA-4620 / CBS 123657 / FGSC 9075 / NRRL 31084 / PH-1</strain>
    </source>
</reference>
<reference key="4">
    <citation type="journal article" date="2015" name="Plant Biotechnol. J.">
        <title>Host-induced gene silencing of an essential chitin synthase gene confers durable resistance to Fusarium head blight and seedling blight in wheat.</title>
        <authorList>
            <person name="Cheng W."/>
            <person name="Song X.S."/>
            <person name="Li H.P."/>
            <person name="Cao L.H."/>
            <person name="Sun K."/>
            <person name="Qiu X.L."/>
            <person name="Xu Y.B."/>
            <person name="Yang P."/>
            <person name="Huang T."/>
            <person name="Zhang J.B."/>
            <person name="Qu B."/>
            <person name="Liao Y.C."/>
        </authorList>
    </citation>
    <scope>FUNCTION</scope>
    <scope>DISRUPTION PHENOTYPE</scope>
</reference>
<reference key="5">
    <citation type="journal article" date="2016" name="Sci. Rep.">
        <title>The chitin synthase FgChs2 and other FgChss co-regulate vegetative development and virulence in F. graminearum.</title>
        <authorList>
            <person name="Liu Z."/>
            <person name="Zhang X."/>
            <person name="Liu X."/>
            <person name="Fu C."/>
            <person name="Han X."/>
            <person name="Yin Y."/>
            <person name="Ma Z."/>
        </authorList>
    </citation>
    <scope>FUNCTION</scope>
    <scope>INDUCTION</scope>
</reference>
<organism>
    <name type="scientific">Gibberella zeae (strain ATCC MYA-4620 / CBS 123657 / FGSC 9075 / NRRL 31084 / PH-1)</name>
    <name type="common">Wheat head blight fungus</name>
    <name type="synonym">Fusarium graminearum</name>
    <dbReference type="NCBI Taxonomy" id="229533"/>
    <lineage>
        <taxon>Eukaryota</taxon>
        <taxon>Fungi</taxon>
        <taxon>Dikarya</taxon>
        <taxon>Ascomycota</taxon>
        <taxon>Pezizomycotina</taxon>
        <taxon>Sordariomycetes</taxon>
        <taxon>Hypocreomycetidae</taxon>
        <taxon>Hypocreales</taxon>
        <taxon>Nectriaceae</taxon>
        <taxon>Fusarium</taxon>
    </lineage>
</organism>
<sequence>MQDLPAGQAQQPFLTRSFFFFQYHFRESDDANASNRSPVSNPYEPDYDQLSPPPMLGAQRPVPEQNESSRDLLHSSYHGSIGQASYDQGSFNGHNSTYGVGGFGHYPPDLHGRLPGSPGYEYPEPEYDVEASRLAESRLSVMHRTPTMQEWSPNGETLSVSPDFAHGRPDSTYQEFDVDESWMMRQQQAQIGGGGLGRSKTRKVKLVQGSVLSIDYPVPSAVKNAIEPRYRNGPGSMEEEFTKMRYTAATCDPNDFTLRNGFNLRPRMYNRHTELLIAITYYNEDKVLLARTLHYTMKNIQDIVNLKRSKFWNKGGPAWQKIVVCLVFDGLDKVDKNVFDVLATVGVYQDGVLKKDVNGKETVAHIFEYTSQISVTPDQQLVRPDPDKPHRNLPPVQFIFCLKQKNSKKINSHRWLFNAFGRILNPEVAILIDAGTKPGPRALLSLWEGFYNDRDLGGACGEIHVMLGKGGKMLLNPLVAVQNFEYKISNVLDKPLESAFGYVSVLPGAFSAYRFRAIMGRPLEQYFHGDHTLSKTLGKKGIDGMNIFKKNMFLAEDRILCFELVAKASQKWHLSYIKASKGETDVPEGASEFIGQRRRWLNGSFAMSLYSLMHFGRMYGSGHNVVRLFFLHIQFVYNLLNVLFSWFSLAAFYLTTTIIMKLVGTPQVLSGYHGWPFGDMASPIVNVLIKYIYIAFLVLQFVLALGNRPKGAQYTYVLSFMVFGLIQLYLLVLTGYLVYRAFTGTPIEDQISFASGQAFFDSFFGGNTGVAGLIIIALITIYGLNYIASFLYLDPWHMFHSFPQYLVLMSTYINILMVYAFNNWHDVSWGTKGSDAAEALPSANIVKDEKGKEAVVEEIEQEQEDIDSKFEKVVWRALAPMSEMMEEKPEAKDVEDSYKSFRTGLVILWLLCNIVLITFVTTDDFSSLGVSKASDVRTPMYFRFLLYSTGVLSIVRFIGFLWFIGRTGIMCCIARR</sequence>
<feature type="chain" id="PRO_0000460794" description="Chitin synthase 3A">
    <location>
        <begin position="1"/>
        <end position="976"/>
    </location>
</feature>
<feature type="transmembrane region" description="Helical" evidence="1">
    <location>
        <begin position="639"/>
        <end position="659"/>
    </location>
</feature>
<feature type="transmembrane region" description="Helical" evidence="1">
    <location>
        <begin position="684"/>
        <end position="704"/>
    </location>
</feature>
<feature type="transmembrane region" description="Helical" evidence="1">
    <location>
        <begin position="717"/>
        <end position="737"/>
    </location>
</feature>
<feature type="transmembrane region" description="Helical" evidence="1">
    <location>
        <begin position="773"/>
        <end position="793"/>
    </location>
</feature>
<feature type="transmembrane region" description="Helical" evidence="1">
    <location>
        <begin position="801"/>
        <end position="821"/>
    </location>
</feature>
<feature type="transmembrane region" description="Helical" evidence="1">
    <location>
        <begin position="903"/>
        <end position="923"/>
    </location>
</feature>
<feature type="transmembrane region" description="Helical" evidence="1">
    <location>
        <begin position="944"/>
        <end position="964"/>
    </location>
</feature>
<feature type="region of interest" description="Disordered" evidence="3">
    <location>
        <begin position="29"/>
        <end position="72"/>
    </location>
</feature>
<feature type="compositionally biased region" description="Polar residues" evidence="3">
    <location>
        <begin position="31"/>
        <end position="40"/>
    </location>
</feature>
<feature type="glycosylation site" description="N-linked (GlcNAc...) asparagine" evidence="2">
    <location>
        <position position="32"/>
    </location>
</feature>
<feature type="glycosylation site" description="N-linked (GlcNAc...) asparagine" evidence="2">
    <location>
        <position position="66"/>
    </location>
</feature>
<feature type="glycosylation site" description="N-linked (GlcNAc...) asparagine" evidence="2">
    <location>
        <position position="95"/>
    </location>
</feature>
<feature type="glycosylation site" description="N-linked (GlcNAc...) asparagine" evidence="2">
    <location>
        <position position="602"/>
    </location>
</feature>
<name>CHS3A_GIBZE</name>
<dbReference type="EC" id="2.4.1.16" evidence="8"/>
<dbReference type="EMBL" id="HG970333">
    <property type="protein sequence ID" value="SCB65810.1"/>
    <property type="molecule type" value="Genomic_DNA"/>
</dbReference>
<dbReference type="SMR" id="A0A1C3YMT2"/>
<dbReference type="STRING" id="229533.A0A1C3YMT2"/>
<dbReference type="VEuPathDB" id="FungiDB:FGRAMPH1_01G12837"/>
<dbReference type="eggNOG" id="KOG2571">
    <property type="taxonomic scope" value="Eukaryota"/>
</dbReference>
<dbReference type="InParanoid" id="A0A1C3YMT2"/>
<dbReference type="Proteomes" id="UP000070720">
    <property type="component" value="Chromosome 2"/>
</dbReference>
<dbReference type="GO" id="GO:0030428">
    <property type="term" value="C:cell septum"/>
    <property type="evidence" value="ECO:0007669"/>
    <property type="project" value="TreeGrafter"/>
</dbReference>
<dbReference type="GO" id="GO:0005886">
    <property type="term" value="C:plasma membrane"/>
    <property type="evidence" value="ECO:0007669"/>
    <property type="project" value="UniProtKB-SubCell"/>
</dbReference>
<dbReference type="GO" id="GO:0004100">
    <property type="term" value="F:chitin synthase activity"/>
    <property type="evidence" value="ECO:0007669"/>
    <property type="project" value="UniProtKB-EC"/>
</dbReference>
<dbReference type="GO" id="GO:0071555">
    <property type="term" value="P:cell wall organization"/>
    <property type="evidence" value="ECO:0007669"/>
    <property type="project" value="UniProtKB-KW"/>
</dbReference>
<dbReference type="GO" id="GO:0006031">
    <property type="term" value="P:chitin biosynthetic process"/>
    <property type="evidence" value="ECO:0007669"/>
    <property type="project" value="InterPro"/>
</dbReference>
<dbReference type="CDD" id="cd04190">
    <property type="entry name" value="Chitin_synth_C"/>
    <property type="match status" value="1"/>
</dbReference>
<dbReference type="InterPro" id="IPR004835">
    <property type="entry name" value="Chitin_synth"/>
</dbReference>
<dbReference type="InterPro" id="IPR004834">
    <property type="entry name" value="Chitin_synth_fun"/>
</dbReference>
<dbReference type="InterPro" id="IPR013616">
    <property type="entry name" value="Chitin_synth_N"/>
</dbReference>
<dbReference type="InterPro" id="IPR029044">
    <property type="entry name" value="Nucleotide-diphossugar_trans"/>
</dbReference>
<dbReference type="PANTHER" id="PTHR22914">
    <property type="entry name" value="CHITIN SYNTHASE"/>
    <property type="match status" value="1"/>
</dbReference>
<dbReference type="PANTHER" id="PTHR22914:SF11">
    <property type="entry name" value="CHITIN SYNTHASE B"/>
    <property type="match status" value="1"/>
</dbReference>
<dbReference type="Pfam" id="PF01644">
    <property type="entry name" value="Chitin_synth_1"/>
    <property type="match status" value="1"/>
</dbReference>
<dbReference type="Pfam" id="PF08407">
    <property type="entry name" value="Chitin_synth_1N"/>
    <property type="match status" value="1"/>
</dbReference>
<dbReference type="SUPFAM" id="SSF53448">
    <property type="entry name" value="Nucleotide-diphospho-sugar transferases"/>
    <property type="match status" value="1"/>
</dbReference>